<accession>Q7RVM2</accession>
<accession>V5IQ49</accession>
<gene>
    <name type="ORF">NCU08340</name>
</gene>
<evidence type="ECO:0000250" key="1"/>
<evidence type="ECO:0000305" key="2"/>
<comment type="function">
    <text evidence="1">GTP-binding protein involved in protein trafficking; may modulate vesicle budding and uncoating within the Golgi apparatus.</text>
</comment>
<comment type="subcellular location">
    <subcellularLocation>
        <location evidence="1">Golgi apparatus</location>
    </subcellularLocation>
</comment>
<comment type="similarity">
    <text evidence="2">Belongs to the small GTPase superfamily. Arf family.</text>
</comment>
<protein>
    <recommendedName>
        <fullName>ADP-ribosylation factor</fullName>
    </recommendedName>
</protein>
<name>ARF_NEUCR</name>
<sequence length="185" mass="20979">MGNTLSIFGKLFDGLFGKKEMRILMVGLDAAGKTTILYKLKLGEVVTTIPTIGFNVETVEYKNIQFTVWDVGGQDKIRPLWRHYFQNTQGIIFVVDSNDRDRVVEAREELQRMLNEDELRDALLLVFANKQDLPNAMNAAEITDKLGLSSLRQRSWYIQATCATTGDGLFEGLDWLSTELKKKSP</sequence>
<reference key="1">
    <citation type="journal article" date="2003" name="Nature">
        <title>The genome sequence of the filamentous fungus Neurospora crassa.</title>
        <authorList>
            <person name="Galagan J.E."/>
            <person name="Calvo S.E."/>
            <person name="Borkovich K.A."/>
            <person name="Selker E.U."/>
            <person name="Read N.D."/>
            <person name="Jaffe D.B."/>
            <person name="FitzHugh W."/>
            <person name="Ma L.-J."/>
            <person name="Smirnov S."/>
            <person name="Purcell S."/>
            <person name="Rehman B."/>
            <person name="Elkins T."/>
            <person name="Engels R."/>
            <person name="Wang S."/>
            <person name="Nielsen C.B."/>
            <person name="Butler J."/>
            <person name="Endrizzi M."/>
            <person name="Qui D."/>
            <person name="Ianakiev P."/>
            <person name="Bell-Pedersen D."/>
            <person name="Nelson M.A."/>
            <person name="Werner-Washburne M."/>
            <person name="Selitrennikoff C.P."/>
            <person name="Kinsey J.A."/>
            <person name="Braun E.L."/>
            <person name="Zelter A."/>
            <person name="Schulte U."/>
            <person name="Kothe G.O."/>
            <person name="Jedd G."/>
            <person name="Mewes H.-W."/>
            <person name="Staben C."/>
            <person name="Marcotte E."/>
            <person name="Greenberg D."/>
            <person name="Roy A."/>
            <person name="Foley K."/>
            <person name="Naylor J."/>
            <person name="Stange-Thomann N."/>
            <person name="Barrett R."/>
            <person name="Gnerre S."/>
            <person name="Kamal M."/>
            <person name="Kamvysselis M."/>
            <person name="Mauceli E.W."/>
            <person name="Bielke C."/>
            <person name="Rudd S."/>
            <person name="Frishman D."/>
            <person name="Krystofova S."/>
            <person name="Rasmussen C."/>
            <person name="Metzenberg R.L."/>
            <person name="Perkins D.D."/>
            <person name="Kroken S."/>
            <person name="Cogoni C."/>
            <person name="Macino G."/>
            <person name="Catcheside D.E.A."/>
            <person name="Li W."/>
            <person name="Pratt R.J."/>
            <person name="Osmani S.A."/>
            <person name="DeSouza C.P.C."/>
            <person name="Glass N.L."/>
            <person name="Orbach M.J."/>
            <person name="Berglund J.A."/>
            <person name="Voelker R."/>
            <person name="Yarden O."/>
            <person name="Plamann M."/>
            <person name="Seiler S."/>
            <person name="Dunlap J.C."/>
            <person name="Radford A."/>
            <person name="Aramayo R."/>
            <person name="Natvig D.O."/>
            <person name="Alex L.A."/>
            <person name="Mannhaupt G."/>
            <person name="Ebbole D.J."/>
            <person name="Freitag M."/>
            <person name="Paulsen I."/>
            <person name="Sachs M.S."/>
            <person name="Lander E.S."/>
            <person name="Nusbaum C."/>
            <person name="Birren B.W."/>
        </authorList>
    </citation>
    <scope>NUCLEOTIDE SEQUENCE [LARGE SCALE GENOMIC DNA]</scope>
    <source>
        <strain>ATCC 24698 / 74-OR23-1A / CBS 708.71 / DSM 1257 / FGSC 987</strain>
    </source>
</reference>
<proteinExistence type="inferred from homology"/>
<organism>
    <name type="scientific">Neurospora crassa (strain ATCC 24698 / 74-OR23-1A / CBS 708.71 / DSM 1257 / FGSC 987)</name>
    <dbReference type="NCBI Taxonomy" id="367110"/>
    <lineage>
        <taxon>Eukaryota</taxon>
        <taxon>Fungi</taxon>
        <taxon>Dikarya</taxon>
        <taxon>Ascomycota</taxon>
        <taxon>Pezizomycotina</taxon>
        <taxon>Sordariomycetes</taxon>
        <taxon>Sordariomycetidae</taxon>
        <taxon>Sordariales</taxon>
        <taxon>Sordariaceae</taxon>
        <taxon>Neurospora</taxon>
    </lineage>
</organism>
<keyword id="KW-0931">ER-Golgi transport</keyword>
<keyword id="KW-0333">Golgi apparatus</keyword>
<keyword id="KW-0342">GTP-binding</keyword>
<keyword id="KW-0449">Lipoprotein</keyword>
<keyword id="KW-0519">Myristate</keyword>
<keyword id="KW-0547">Nucleotide-binding</keyword>
<keyword id="KW-0653">Protein transport</keyword>
<keyword id="KW-1185">Reference proteome</keyword>
<keyword id="KW-0813">Transport</keyword>
<dbReference type="EMBL" id="CM002236">
    <property type="protein sequence ID" value="ESA44151.1"/>
    <property type="molecule type" value="Genomic_DNA"/>
</dbReference>
<dbReference type="EMBL" id="CM002236">
    <property type="protein sequence ID" value="ESA44152.1"/>
    <property type="molecule type" value="Genomic_DNA"/>
</dbReference>
<dbReference type="RefSeq" id="XP_011393189.1">
    <property type="nucleotide sequence ID" value="XM_011394887.1"/>
</dbReference>
<dbReference type="RefSeq" id="XP_011393190.1">
    <property type="nucleotide sequence ID" value="XM_011394888.1"/>
</dbReference>
<dbReference type="SMR" id="Q7RVM2"/>
<dbReference type="BioGRID" id="1982572">
    <property type="interactions" value="1"/>
</dbReference>
<dbReference type="FunCoup" id="Q7RVM2">
    <property type="interactions" value="1138"/>
</dbReference>
<dbReference type="STRING" id="367110.Q7RVM2"/>
<dbReference type="PaxDb" id="5141-EFNCRP00000006444"/>
<dbReference type="EnsemblFungi" id="ESA44151">
    <property type="protein sequence ID" value="ESA44151"/>
    <property type="gene ID" value="NCU08340"/>
</dbReference>
<dbReference type="EnsemblFungi" id="ESA44152">
    <property type="protein sequence ID" value="ESA44152"/>
    <property type="gene ID" value="NCU08340"/>
</dbReference>
<dbReference type="GeneID" id="3881408"/>
<dbReference type="KEGG" id="ncr:NCU08340"/>
<dbReference type="VEuPathDB" id="FungiDB:NCU08340"/>
<dbReference type="HOGENOM" id="CLU_040729_9_3_1"/>
<dbReference type="InParanoid" id="Q7RVM2"/>
<dbReference type="OMA" id="IRQRHWF"/>
<dbReference type="OrthoDB" id="2011769at2759"/>
<dbReference type="Proteomes" id="UP000001805">
    <property type="component" value="Chromosome 1, Linkage Group I"/>
</dbReference>
<dbReference type="GO" id="GO:0005737">
    <property type="term" value="C:cytoplasm"/>
    <property type="evidence" value="ECO:0000318"/>
    <property type="project" value="GO_Central"/>
</dbReference>
<dbReference type="GO" id="GO:0005794">
    <property type="term" value="C:Golgi apparatus"/>
    <property type="evidence" value="ECO:0007669"/>
    <property type="project" value="UniProtKB-SubCell"/>
</dbReference>
<dbReference type="GO" id="GO:0005886">
    <property type="term" value="C:plasma membrane"/>
    <property type="evidence" value="ECO:0000318"/>
    <property type="project" value="GO_Central"/>
</dbReference>
<dbReference type="GO" id="GO:0005525">
    <property type="term" value="F:GTP binding"/>
    <property type="evidence" value="ECO:0000318"/>
    <property type="project" value="GO_Central"/>
</dbReference>
<dbReference type="GO" id="GO:0003924">
    <property type="term" value="F:GTPase activity"/>
    <property type="evidence" value="ECO:0007669"/>
    <property type="project" value="InterPro"/>
</dbReference>
<dbReference type="GO" id="GO:0006886">
    <property type="term" value="P:intracellular protein transport"/>
    <property type="evidence" value="ECO:0000318"/>
    <property type="project" value="GO_Central"/>
</dbReference>
<dbReference type="GO" id="GO:0016192">
    <property type="term" value="P:vesicle-mediated transport"/>
    <property type="evidence" value="ECO:0000318"/>
    <property type="project" value="GO_Central"/>
</dbReference>
<dbReference type="CDD" id="cd04150">
    <property type="entry name" value="Arf1_5_like"/>
    <property type="match status" value="1"/>
</dbReference>
<dbReference type="FunFam" id="3.40.50.300:FF:003500">
    <property type="entry name" value="ADP-ribosylation factor 1"/>
    <property type="match status" value="1"/>
</dbReference>
<dbReference type="Gene3D" id="3.40.50.300">
    <property type="entry name" value="P-loop containing nucleotide triphosphate hydrolases"/>
    <property type="match status" value="1"/>
</dbReference>
<dbReference type="InterPro" id="IPR045872">
    <property type="entry name" value="Arf1-5-like"/>
</dbReference>
<dbReference type="InterPro" id="IPR027417">
    <property type="entry name" value="P-loop_NTPase"/>
</dbReference>
<dbReference type="InterPro" id="IPR005225">
    <property type="entry name" value="Small_GTP-bd"/>
</dbReference>
<dbReference type="InterPro" id="IPR024156">
    <property type="entry name" value="Small_GTPase_ARF"/>
</dbReference>
<dbReference type="InterPro" id="IPR006689">
    <property type="entry name" value="Small_GTPase_ARF/SAR"/>
</dbReference>
<dbReference type="NCBIfam" id="TIGR00231">
    <property type="entry name" value="small_GTP"/>
    <property type="match status" value="1"/>
</dbReference>
<dbReference type="PANTHER" id="PTHR11711">
    <property type="entry name" value="ADP RIBOSYLATION FACTOR-RELATED"/>
    <property type="match status" value="1"/>
</dbReference>
<dbReference type="Pfam" id="PF00025">
    <property type="entry name" value="Arf"/>
    <property type="match status" value="1"/>
</dbReference>
<dbReference type="PRINTS" id="PR00328">
    <property type="entry name" value="SAR1GTPBP"/>
</dbReference>
<dbReference type="SMART" id="SM00177">
    <property type="entry name" value="ARF"/>
    <property type="match status" value="1"/>
</dbReference>
<dbReference type="SMART" id="SM00175">
    <property type="entry name" value="RAB"/>
    <property type="match status" value="1"/>
</dbReference>
<dbReference type="SMART" id="SM00178">
    <property type="entry name" value="SAR"/>
    <property type="match status" value="1"/>
</dbReference>
<dbReference type="SUPFAM" id="SSF52540">
    <property type="entry name" value="P-loop containing nucleoside triphosphate hydrolases"/>
    <property type="match status" value="1"/>
</dbReference>
<dbReference type="PROSITE" id="PS51417">
    <property type="entry name" value="ARF"/>
    <property type="match status" value="1"/>
</dbReference>
<feature type="initiator methionine" description="Removed" evidence="1">
    <location>
        <position position="1"/>
    </location>
</feature>
<feature type="chain" id="PRO_0000207415" description="ADP-ribosylation factor">
    <location>
        <begin position="2"/>
        <end position="185"/>
    </location>
</feature>
<feature type="binding site" evidence="1">
    <location>
        <begin position="27"/>
        <end position="34"/>
    </location>
    <ligand>
        <name>GTP</name>
        <dbReference type="ChEBI" id="CHEBI:37565"/>
    </ligand>
</feature>
<feature type="binding site" evidence="1">
    <location>
        <begin position="70"/>
        <end position="74"/>
    </location>
    <ligand>
        <name>GTP</name>
        <dbReference type="ChEBI" id="CHEBI:37565"/>
    </ligand>
</feature>
<feature type="binding site" evidence="1">
    <location>
        <begin position="129"/>
        <end position="132"/>
    </location>
    <ligand>
        <name>GTP</name>
        <dbReference type="ChEBI" id="CHEBI:37565"/>
    </ligand>
</feature>
<feature type="lipid moiety-binding region" description="N-myristoyl glycine" evidence="1">
    <location>
        <position position="2"/>
    </location>
</feature>